<protein>
    <recommendedName>
        <fullName evidence="1">Prokaryotic ubiquitin-like protein Pup</fullName>
    </recommendedName>
    <alternativeName>
        <fullName evidence="1">Bacterial ubiquitin-like modifier</fullName>
    </alternativeName>
</protein>
<accession>A4X743</accession>
<evidence type="ECO:0000255" key="1">
    <source>
        <dbReference type="HAMAP-Rule" id="MF_02106"/>
    </source>
</evidence>
<evidence type="ECO:0000256" key="2">
    <source>
        <dbReference type="SAM" id="MobiDB-lite"/>
    </source>
</evidence>
<evidence type="ECO:0000305" key="3"/>
<comment type="function">
    <text evidence="1">Protein modifier that is covalently attached to lysine residues of substrate proteins, thereby targeting them for proteasomal degradation. The tagging system is termed pupylation.</text>
</comment>
<comment type="pathway">
    <text evidence="1">Protein degradation; proteasomal Pup-dependent pathway.</text>
</comment>
<comment type="subunit">
    <text evidence="1">Strongly interacts with the proteasome-associated ATPase ARC through a hydrophobic interface; the interacting region of Pup lies in its C-terminal half. There is one Pup binding site per ARC hexamer ring.</text>
</comment>
<comment type="domain">
    <text evidence="1">The N-terminal unstructured half of Pup provides a signal required to initiate unfolding and degradation by the proteasome but is not needed for pupylation, while the C-terminal helical half of Pup interacts with ARC to target proteins to the proteasome.</text>
</comment>
<comment type="similarity">
    <text evidence="1">Belongs to the prokaryotic ubiquitin-like protein family.</text>
</comment>
<comment type="sequence caution" evidence="3">
    <conflict type="erroneous initiation">
        <sequence resource="EMBL-CDS" id="ABP54693"/>
    </conflict>
</comment>
<sequence>MATRDSGGQSQTGRSQQGEEIEDVTTEASAEAAERHAEITEDVDDLLDEIDSVLEENAEEFVRGYVQKGGE</sequence>
<proteinExistence type="inferred from homology"/>
<gene>
    <name evidence="1" type="primary">pup</name>
    <name type="ordered locus">Strop_2243</name>
</gene>
<reference key="1">
    <citation type="journal article" date="2007" name="Proc. Natl. Acad. Sci. U.S.A.">
        <title>Genome sequencing reveals complex secondary metabolome in the marine actinomycete Salinispora tropica.</title>
        <authorList>
            <person name="Udwary D.W."/>
            <person name="Zeigler L."/>
            <person name="Asolkar R.N."/>
            <person name="Singan V."/>
            <person name="Lapidus A."/>
            <person name="Fenical W."/>
            <person name="Jensen P.R."/>
            <person name="Moore B.S."/>
        </authorList>
    </citation>
    <scope>NUCLEOTIDE SEQUENCE [LARGE SCALE GENOMIC DNA]</scope>
    <source>
        <strain>ATCC BAA-916 / DSM 44818 / JCM 13857 / NBRC 105044 / CNB-440</strain>
    </source>
</reference>
<dbReference type="EMBL" id="CP000667">
    <property type="protein sequence ID" value="ABP54693.1"/>
    <property type="status" value="ALT_INIT"/>
    <property type="molecule type" value="Genomic_DNA"/>
</dbReference>
<dbReference type="RefSeq" id="WP_026274917.1">
    <property type="nucleotide sequence ID" value="NC_009380.1"/>
</dbReference>
<dbReference type="SMR" id="A4X743"/>
<dbReference type="STRING" id="369723.Strop_2243"/>
<dbReference type="KEGG" id="stp:Strop_2243"/>
<dbReference type="eggNOG" id="ENOG50333JS">
    <property type="taxonomic scope" value="Bacteria"/>
</dbReference>
<dbReference type="HOGENOM" id="CLU_183816_2_0_11"/>
<dbReference type="UniPathway" id="UPA00997"/>
<dbReference type="Proteomes" id="UP000000235">
    <property type="component" value="Chromosome"/>
</dbReference>
<dbReference type="GO" id="GO:0070628">
    <property type="term" value="F:proteasome binding"/>
    <property type="evidence" value="ECO:0007669"/>
    <property type="project" value="UniProtKB-UniRule"/>
</dbReference>
<dbReference type="GO" id="GO:0031386">
    <property type="term" value="F:protein tag activity"/>
    <property type="evidence" value="ECO:0007669"/>
    <property type="project" value="UniProtKB-UniRule"/>
</dbReference>
<dbReference type="GO" id="GO:0019941">
    <property type="term" value="P:modification-dependent protein catabolic process"/>
    <property type="evidence" value="ECO:0007669"/>
    <property type="project" value="UniProtKB-UniRule"/>
</dbReference>
<dbReference type="GO" id="GO:0010498">
    <property type="term" value="P:proteasomal protein catabolic process"/>
    <property type="evidence" value="ECO:0007669"/>
    <property type="project" value="UniProtKB-UniRule"/>
</dbReference>
<dbReference type="GO" id="GO:0070490">
    <property type="term" value="P:protein pupylation"/>
    <property type="evidence" value="ECO:0007669"/>
    <property type="project" value="UniProtKB-UniRule"/>
</dbReference>
<dbReference type="HAMAP" id="MF_02106">
    <property type="entry name" value="Pup"/>
    <property type="match status" value="1"/>
</dbReference>
<dbReference type="InterPro" id="IPR008515">
    <property type="entry name" value="Ubiquitin-like_Pup"/>
</dbReference>
<dbReference type="NCBIfam" id="TIGR03687">
    <property type="entry name" value="pupylate_cterm"/>
    <property type="match status" value="1"/>
</dbReference>
<dbReference type="Pfam" id="PF05639">
    <property type="entry name" value="Pup"/>
    <property type="match status" value="1"/>
</dbReference>
<organism>
    <name type="scientific">Salinispora tropica (strain ATCC BAA-916 / DSM 44818 / JCM 13857 / NBRC 105044 / CNB-440)</name>
    <dbReference type="NCBI Taxonomy" id="369723"/>
    <lineage>
        <taxon>Bacteria</taxon>
        <taxon>Bacillati</taxon>
        <taxon>Actinomycetota</taxon>
        <taxon>Actinomycetes</taxon>
        <taxon>Micromonosporales</taxon>
        <taxon>Micromonosporaceae</taxon>
        <taxon>Salinispora</taxon>
    </lineage>
</organism>
<keyword id="KW-0175">Coiled coil</keyword>
<keyword id="KW-1017">Isopeptide bond</keyword>
<keyword id="KW-1185">Reference proteome</keyword>
<keyword id="KW-0833">Ubl conjugation pathway</keyword>
<name>PUP_SALTO</name>
<feature type="chain" id="PRO_0000390612" description="Prokaryotic ubiquitin-like protein Pup">
    <location>
        <begin position="1"/>
        <end position="71"/>
    </location>
</feature>
<feature type="region of interest" description="Disordered" evidence="2">
    <location>
        <begin position="1"/>
        <end position="42"/>
    </location>
</feature>
<feature type="region of interest" description="ARC ATPase binding" evidence="1">
    <location>
        <begin position="27"/>
        <end position="65"/>
    </location>
</feature>
<feature type="coiled-coil region" evidence="1">
    <location>
        <begin position="29"/>
        <end position="60"/>
    </location>
</feature>
<feature type="compositionally biased region" description="Low complexity" evidence="2">
    <location>
        <begin position="1"/>
        <end position="18"/>
    </location>
</feature>
<feature type="cross-link" description="Isoglutamyl lysine isopeptide (Glu-Lys) (interchain with K-? in acceptor proteins)" evidence="1">
    <location>
        <position position="71"/>
    </location>
</feature>